<evidence type="ECO:0000250" key="1"/>
<evidence type="ECO:0000255" key="2"/>
<evidence type="ECO:0000256" key="3">
    <source>
        <dbReference type="SAM" id="MobiDB-lite"/>
    </source>
</evidence>
<evidence type="ECO:0000305" key="4"/>
<proteinExistence type="inferred from homology"/>
<dbReference type="EMBL" id="EQ962657">
    <property type="protein sequence ID" value="EED15490.1"/>
    <property type="molecule type" value="Genomic_DNA"/>
</dbReference>
<dbReference type="RefSeq" id="XP_002485443.1">
    <property type="nucleotide sequence ID" value="XM_002485398.1"/>
</dbReference>
<dbReference type="SMR" id="B8MLF7"/>
<dbReference type="STRING" id="441959.B8MLF7"/>
<dbReference type="GeneID" id="8100643"/>
<dbReference type="VEuPathDB" id="FungiDB:TSTA_049270"/>
<dbReference type="eggNOG" id="ENOG502S7IA">
    <property type="taxonomic scope" value="Eukaryota"/>
</dbReference>
<dbReference type="HOGENOM" id="CLU_047598_3_0_1"/>
<dbReference type="InParanoid" id="B8MLF7"/>
<dbReference type="OMA" id="AFCAHSA"/>
<dbReference type="OrthoDB" id="4225486at2759"/>
<dbReference type="PhylomeDB" id="B8MLF7"/>
<dbReference type="Proteomes" id="UP000001745">
    <property type="component" value="Unassembled WGS sequence"/>
</dbReference>
<dbReference type="GO" id="GO:0005739">
    <property type="term" value="C:mitochondrion"/>
    <property type="evidence" value="ECO:0007669"/>
    <property type="project" value="UniProtKB-SubCell"/>
</dbReference>
<dbReference type="GO" id="GO:0005634">
    <property type="term" value="C:nucleus"/>
    <property type="evidence" value="ECO:0007669"/>
    <property type="project" value="TreeGrafter"/>
</dbReference>
<dbReference type="InterPro" id="IPR010487">
    <property type="entry name" value="NGRN/Rrg9"/>
</dbReference>
<dbReference type="PANTHER" id="PTHR13475">
    <property type="entry name" value="NEUGRIN"/>
    <property type="match status" value="1"/>
</dbReference>
<dbReference type="PANTHER" id="PTHR13475:SF3">
    <property type="entry name" value="NEUGRIN"/>
    <property type="match status" value="1"/>
</dbReference>
<dbReference type="Pfam" id="PF06413">
    <property type="entry name" value="Neugrin"/>
    <property type="match status" value="1"/>
</dbReference>
<gene>
    <name type="primary">rrg9</name>
    <name type="ORF">TSTA_049270</name>
</gene>
<comment type="function">
    <text evidence="1">Required for respiratory activity and maintenance and expression of the mitochondrial genome.</text>
</comment>
<comment type="subcellular location">
    <subcellularLocation>
        <location evidence="1">Mitochondrion</location>
    </subcellularLocation>
</comment>
<comment type="similarity">
    <text evidence="4">Belongs to the RRG9 family.</text>
</comment>
<keyword id="KW-0496">Mitochondrion</keyword>
<keyword id="KW-1185">Reference proteome</keyword>
<keyword id="KW-0809">Transit peptide</keyword>
<sequence length="289" mass="33303">MAVCVASRRLTLLNVIQGLYRTELVSQHAGQSAINTLTVVSSNCWSSKRTFSTSQAYLNGVNEFISDVTTRNTADEDIISELTSTKPGSSSESKKNSKSTSEKSKDRKNKPKEAKKIGIKKSTLPPLNPEKKRRREQWQVQKEALQNKFQEGWHPRKKLPPDSLDTIRHLYATKPDVWTTPVLAEQFKVSPEAIRRILKSKWQPSEEERQRREERWAERYRKIYSHMEELGLRKPKGEWTAKVSDARRLGLEEKPLRQTVRKQPRSDEKQVNISRPDREPAPKGSTSVE</sequence>
<feature type="transit peptide" description="Mitochondrion" evidence="2">
    <location>
        <begin position="1"/>
        <end position="58"/>
    </location>
</feature>
<feature type="chain" id="PRO_0000407966" description="Required for respiratory growth protein 9, mitochondrial">
    <location>
        <begin position="59"/>
        <end position="289"/>
    </location>
</feature>
<feature type="region of interest" description="Disordered" evidence="3">
    <location>
        <begin position="81"/>
        <end position="141"/>
    </location>
</feature>
<feature type="region of interest" description="Disordered" evidence="3">
    <location>
        <begin position="250"/>
        <end position="289"/>
    </location>
</feature>
<feature type="compositionally biased region" description="Basic and acidic residues" evidence="3">
    <location>
        <begin position="92"/>
        <end position="116"/>
    </location>
</feature>
<feature type="compositionally biased region" description="Basic and acidic residues" evidence="3">
    <location>
        <begin position="264"/>
        <end position="281"/>
    </location>
</feature>
<accession>B8MLF7</accession>
<name>RRG9_TALSN</name>
<organism>
    <name type="scientific">Talaromyces stipitatus (strain ATCC 10500 / CBS 375.48 / QM 6759 / NRRL 1006)</name>
    <name type="common">Penicillium stipitatum</name>
    <dbReference type="NCBI Taxonomy" id="441959"/>
    <lineage>
        <taxon>Eukaryota</taxon>
        <taxon>Fungi</taxon>
        <taxon>Dikarya</taxon>
        <taxon>Ascomycota</taxon>
        <taxon>Pezizomycotina</taxon>
        <taxon>Eurotiomycetes</taxon>
        <taxon>Eurotiomycetidae</taxon>
        <taxon>Eurotiales</taxon>
        <taxon>Trichocomaceae</taxon>
        <taxon>Talaromyces</taxon>
        <taxon>Talaromyces sect. Talaromyces</taxon>
    </lineage>
</organism>
<protein>
    <recommendedName>
        <fullName>Required for respiratory growth protein 9, mitochondrial</fullName>
    </recommendedName>
</protein>
<reference key="1">
    <citation type="journal article" date="2015" name="Genome Announc.">
        <title>Genome sequence of the AIDS-associated pathogen Penicillium marneffei (ATCC18224) and its near taxonomic relative Talaromyces stipitatus (ATCC10500).</title>
        <authorList>
            <person name="Nierman W.C."/>
            <person name="Fedorova-Abrams N.D."/>
            <person name="Andrianopoulos A."/>
        </authorList>
    </citation>
    <scope>NUCLEOTIDE SEQUENCE [LARGE SCALE GENOMIC DNA]</scope>
    <source>
        <strain>ATCC 10500 / CBS 375.48 / QM 6759 / NRRL 1006</strain>
    </source>
</reference>